<reference key="1">
    <citation type="journal article" date="2003" name="Curr. Microbiol.">
        <title>Biochemical and functional characterization of a eukaryotic-type protein kinase, SpkB, in the cyanobacterium, Synechocystis sp. PCC 6803.</title>
        <authorList>
            <person name="Kamei A."/>
            <person name="Yoshihara S."/>
            <person name="Yuasa T."/>
            <person name="Geng X."/>
            <person name="Ikeuchi M."/>
        </authorList>
    </citation>
    <scope>NUCLEOTIDE SEQUENCE [GENOMIC DNA]</scope>
    <scope>CHARACTERIZATION</scope>
</reference>
<reference key="2">
    <citation type="journal article" date="1996" name="DNA Res.">
        <title>Sequence analysis of the genome of the unicellular cyanobacterium Synechocystis sp. strain PCC6803. II. Sequence determination of the entire genome and assignment of potential protein-coding regions.</title>
        <authorList>
            <person name="Kaneko T."/>
            <person name="Sato S."/>
            <person name="Kotani H."/>
            <person name="Tanaka A."/>
            <person name="Asamizu E."/>
            <person name="Nakamura Y."/>
            <person name="Miyajima N."/>
            <person name="Hirosawa M."/>
            <person name="Sugiura M."/>
            <person name="Sasamoto S."/>
            <person name="Kimura T."/>
            <person name="Hosouchi T."/>
            <person name="Matsuno A."/>
            <person name="Muraki A."/>
            <person name="Nakazaki N."/>
            <person name="Naruo K."/>
            <person name="Okumura S."/>
            <person name="Shimpo S."/>
            <person name="Takeuchi C."/>
            <person name="Wada T."/>
            <person name="Watanabe A."/>
            <person name="Yamada M."/>
            <person name="Yasuda M."/>
            <person name="Tabata S."/>
        </authorList>
    </citation>
    <scope>NUCLEOTIDE SEQUENCE [LARGE SCALE GENOMIC DNA]</scope>
    <source>
        <strain>ATCC 27184 / PCC 6803 / Kazusa</strain>
    </source>
</reference>
<name>SPKB_SYNY3</name>
<dbReference type="EC" id="2.7.11.1"/>
<dbReference type="EMBL" id="AB046598">
    <property type="protein sequence ID" value="BAB17034.1"/>
    <property type="molecule type" value="Genomic_DNA"/>
</dbReference>
<dbReference type="EMBL" id="BA000022">
    <property type="protein sequence ID" value="BAA18391.1"/>
    <property type="molecule type" value="Genomic_DNA"/>
</dbReference>
<dbReference type="PIR" id="S76132">
    <property type="entry name" value="S76132"/>
</dbReference>
<dbReference type="SMR" id="P74297"/>
<dbReference type="IntAct" id="P74297">
    <property type="interactions" value="4"/>
</dbReference>
<dbReference type="STRING" id="1148.gene:10499267"/>
<dbReference type="PaxDb" id="1148-1653478"/>
<dbReference type="EnsemblBacteria" id="BAA18391">
    <property type="protein sequence ID" value="BAA18391"/>
    <property type="gene ID" value="BAA18391"/>
</dbReference>
<dbReference type="KEGG" id="syn:slr1697"/>
<dbReference type="eggNOG" id="COG0515">
    <property type="taxonomic scope" value="Bacteria"/>
</dbReference>
<dbReference type="eggNOG" id="COG1357">
    <property type="taxonomic scope" value="Bacteria"/>
</dbReference>
<dbReference type="InParanoid" id="P74297"/>
<dbReference type="PhylomeDB" id="P74297"/>
<dbReference type="BRENDA" id="2.7.11.1">
    <property type="organism ID" value="382"/>
</dbReference>
<dbReference type="Proteomes" id="UP000001425">
    <property type="component" value="Chromosome"/>
</dbReference>
<dbReference type="GO" id="GO:0005524">
    <property type="term" value="F:ATP binding"/>
    <property type="evidence" value="ECO:0007669"/>
    <property type="project" value="UniProtKB-KW"/>
</dbReference>
<dbReference type="GO" id="GO:0106310">
    <property type="term" value="F:protein serine kinase activity"/>
    <property type="evidence" value="ECO:0007669"/>
    <property type="project" value="RHEA"/>
</dbReference>
<dbReference type="GO" id="GO:0004674">
    <property type="term" value="F:protein serine/threonine kinase activity"/>
    <property type="evidence" value="ECO:0000318"/>
    <property type="project" value="GO_Central"/>
</dbReference>
<dbReference type="CDD" id="cd14014">
    <property type="entry name" value="STKc_PknB_like"/>
    <property type="match status" value="1"/>
</dbReference>
<dbReference type="Gene3D" id="2.160.20.80">
    <property type="entry name" value="E3 ubiquitin-protein ligase SopA"/>
    <property type="match status" value="1"/>
</dbReference>
<dbReference type="Gene3D" id="1.10.510.10">
    <property type="entry name" value="Transferase(Phosphotransferase) domain 1"/>
    <property type="match status" value="1"/>
</dbReference>
<dbReference type="InterPro" id="IPR001646">
    <property type="entry name" value="5peptide_repeat"/>
</dbReference>
<dbReference type="InterPro" id="IPR011009">
    <property type="entry name" value="Kinase-like_dom_sf"/>
</dbReference>
<dbReference type="InterPro" id="IPR000719">
    <property type="entry name" value="Prot_kinase_dom"/>
</dbReference>
<dbReference type="InterPro" id="IPR017441">
    <property type="entry name" value="Protein_kinase_ATP_BS"/>
</dbReference>
<dbReference type="InterPro" id="IPR016252">
    <property type="entry name" value="Ser/Thr_kinase_SpkB"/>
</dbReference>
<dbReference type="NCBIfam" id="NF045510">
    <property type="entry name" value="4Cys_prefix_kin"/>
    <property type="match status" value="1"/>
</dbReference>
<dbReference type="PANTHER" id="PTHR24363">
    <property type="entry name" value="SERINE/THREONINE PROTEIN KINASE"/>
    <property type="match status" value="1"/>
</dbReference>
<dbReference type="PANTHER" id="PTHR24363:SF0">
    <property type="entry name" value="SERINE_THREONINE KINASE LIKE DOMAIN CONTAINING 1"/>
    <property type="match status" value="1"/>
</dbReference>
<dbReference type="Pfam" id="PF00805">
    <property type="entry name" value="Pentapeptide"/>
    <property type="match status" value="2"/>
</dbReference>
<dbReference type="Pfam" id="PF00069">
    <property type="entry name" value="Pkinase"/>
    <property type="match status" value="1"/>
</dbReference>
<dbReference type="PIRSF" id="PIRSF000647">
    <property type="entry name" value="Ser/Thr_PK_SpkB"/>
    <property type="match status" value="1"/>
</dbReference>
<dbReference type="SMART" id="SM00220">
    <property type="entry name" value="S_TKc"/>
    <property type="match status" value="1"/>
</dbReference>
<dbReference type="SUPFAM" id="SSF141571">
    <property type="entry name" value="Pentapeptide repeat-like"/>
    <property type="match status" value="1"/>
</dbReference>
<dbReference type="SUPFAM" id="SSF56112">
    <property type="entry name" value="Protein kinase-like (PK-like)"/>
    <property type="match status" value="1"/>
</dbReference>
<dbReference type="PROSITE" id="PS00107">
    <property type="entry name" value="PROTEIN_KINASE_ATP"/>
    <property type="match status" value="1"/>
</dbReference>
<dbReference type="PROSITE" id="PS50011">
    <property type="entry name" value="PROTEIN_KINASE_DOM"/>
    <property type="match status" value="1"/>
</dbReference>
<feature type="chain" id="PRO_0000171240" description="Serine/threonine-protein kinase B">
    <location>
        <begin position="1"/>
        <end position="574"/>
    </location>
</feature>
<feature type="domain" description="Protein kinase" evidence="1">
    <location>
        <begin position="34"/>
        <end position="301"/>
    </location>
</feature>
<feature type="domain" description="Pentapeptide repeat 1">
    <location>
        <begin position="454"/>
        <end position="493"/>
    </location>
</feature>
<feature type="domain" description="Pentapeptide repeat 2">
    <location>
        <begin position="504"/>
        <end position="543"/>
    </location>
</feature>
<feature type="region of interest" description="Disordered" evidence="2">
    <location>
        <begin position="319"/>
        <end position="407"/>
    </location>
</feature>
<feature type="compositionally biased region" description="Polar residues" evidence="2">
    <location>
        <begin position="343"/>
        <end position="364"/>
    </location>
</feature>
<feature type="active site" description="Proton acceptor" evidence="1">
    <location>
        <position position="163"/>
    </location>
</feature>
<feature type="binding site" evidence="1">
    <location>
        <begin position="40"/>
        <end position="48"/>
    </location>
    <ligand>
        <name>ATP</name>
        <dbReference type="ChEBI" id="CHEBI:30616"/>
    </ligand>
</feature>
<feature type="binding site" evidence="1">
    <location>
        <position position="65"/>
    </location>
    <ligand>
        <name>ATP</name>
        <dbReference type="ChEBI" id="CHEBI:30616"/>
    </ligand>
</feature>
<gene>
    <name type="primary">spkB</name>
    <name type="ordered locus">slr1697</name>
</gene>
<keyword id="KW-0067">ATP-binding</keyword>
<keyword id="KW-0418">Kinase</keyword>
<keyword id="KW-0547">Nucleotide-binding</keyword>
<keyword id="KW-0597">Phosphoprotein</keyword>
<keyword id="KW-1185">Reference proteome</keyword>
<keyword id="KW-0677">Repeat</keyword>
<keyword id="KW-0723">Serine/threonine-protein kinase</keyword>
<keyword id="KW-0808">Transferase</keyword>
<comment type="function">
    <text>Protein kinase required for cell motility, but not for phototaxis.</text>
</comment>
<comment type="catalytic activity">
    <reaction>
        <text>L-seryl-[protein] + ATP = O-phospho-L-seryl-[protein] + ADP + H(+)</text>
        <dbReference type="Rhea" id="RHEA:17989"/>
        <dbReference type="Rhea" id="RHEA-COMP:9863"/>
        <dbReference type="Rhea" id="RHEA-COMP:11604"/>
        <dbReference type="ChEBI" id="CHEBI:15378"/>
        <dbReference type="ChEBI" id="CHEBI:29999"/>
        <dbReference type="ChEBI" id="CHEBI:30616"/>
        <dbReference type="ChEBI" id="CHEBI:83421"/>
        <dbReference type="ChEBI" id="CHEBI:456216"/>
        <dbReference type="EC" id="2.7.11.1"/>
    </reaction>
</comment>
<comment type="catalytic activity">
    <reaction>
        <text>L-threonyl-[protein] + ATP = O-phospho-L-threonyl-[protein] + ADP + H(+)</text>
        <dbReference type="Rhea" id="RHEA:46608"/>
        <dbReference type="Rhea" id="RHEA-COMP:11060"/>
        <dbReference type="Rhea" id="RHEA-COMP:11605"/>
        <dbReference type="ChEBI" id="CHEBI:15378"/>
        <dbReference type="ChEBI" id="CHEBI:30013"/>
        <dbReference type="ChEBI" id="CHEBI:30616"/>
        <dbReference type="ChEBI" id="CHEBI:61977"/>
        <dbReference type="ChEBI" id="CHEBI:456216"/>
        <dbReference type="EC" id="2.7.11.1"/>
    </reaction>
</comment>
<comment type="PTM">
    <text>Autophosphorylated.</text>
</comment>
<comment type="similarity">
    <text evidence="1">Belongs to the protein kinase superfamily. Ser/Thr protein kinase family.</text>
</comment>
<evidence type="ECO:0000255" key="1">
    <source>
        <dbReference type="PROSITE-ProRule" id="PRU00159"/>
    </source>
</evidence>
<evidence type="ECO:0000256" key="2">
    <source>
        <dbReference type="SAM" id="MobiDB-lite"/>
    </source>
</evidence>
<protein>
    <recommendedName>
        <fullName>Serine/threonine-protein kinase B</fullName>
        <ecNumber>2.7.11.1</ecNumber>
    </recommendedName>
</protein>
<accession>P74297</accession>
<organism>
    <name type="scientific">Synechocystis sp. (strain ATCC 27184 / PCC 6803 / Kazusa)</name>
    <dbReference type="NCBI Taxonomy" id="1111708"/>
    <lineage>
        <taxon>Bacteria</taxon>
        <taxon>Bacillati</taxon>
        <taxon>Cyanobacteriota</taxon>
        <taxon>Cyanophyceae</taxon>
        <taxon>Synechococcales</taxon>
        <taxon>Merismopediaceae</taxon>
        <taxon>Synechocystis</taxon>
    </lineage>
</organism>
<proteinExistence type="evidence at protein level"/>
<sequence>MSFCVNPNCPHPKNPNNVQVCQACGNSLRLNGRYQTLGLLGKGGFGATFAAADVALPGTPICVVKQLRPQTDDPNVFRMAKELFEREAQTLGRVGNHPQVPRLLDYFEDDHQFYLVQEYVKGHNLHQEVKKNGTFTEGSVKQFLTEILPILDYIHSQKVIHRDIKPANLIRRQTDQKLVLIDFGAVKNQIDSVLSSNTSAQTALTAFAVGTAGFAPPEQMAMRPVYASDIYATGVTCLYLLTGKTPKEIDCNSQTGEMDWEKHVTVSSKFAEVIRKMLELSVRHRYKSAQQVLDALEMPTYEDGMMQGMVSTPFTTLTGAGDEPATGIRMGNSSSPDYGDPSTRFNTNVQPRDPSSTSLNTGIKTRTAKPRQSPRDRATSNIESPTTRVRPASNMADGGSVGAGGIDYNMVNPKPFSRREEEKQAIANQPETKRWNGKTFLAEYAQGKRDFADQNLVGIVLAKAFVPGINCYQANLTNANFEQAELTRADFGKARLKNVIFKGANLSDAYFGYADLRGADLRGANLNGVNFKYANLQGANFSGADLGSAKVSPEQLKLAKTNWRTVMPGSGRRR</sequence>